<dbReference type="EMBL" id="AL391150">
    <property type="protein sequence ID" value="CAC01893.1"/>
    <property type="molecule type" value="Genomic_DNA"/>
</dbReference>
<dbReference type="EMBL" id="CP002688">
    <property type="protein sequence ID" value="AED92433.1"/>
    <property type="molecule type" value="Genomic_DNA"/>
</dbReference>
<dbReference type="EMBL" id="AK117226">
    <property type="protein sequence ID" value="BAC41902.1"/>
    <property type="molecule type" value="mRNA"/>
</dbReference>
<dbReference type="EMBL" id="BT005905">
    <property type="protein sequence ID" value="AAO64840.1"/>
    <property type="molecule type" value="mRNA"/>
</dbReference>
<dbReference type="PIR" id="T51475">
    <property type="entry name" value="T51475"/>
</dbReference>
<dbReference type="RefSeq" id="NP_197251.1">
    <property type="nucleotide sequence ID" value="NM_121755.3"/>
</dbReference>
<dbReference type="SMR" id="Q9LF53"/>
<dbReference type="BioGRID" id="16891">
    <property type="interactions" value="49"/>
</dbReference>
<dbReference type="DIP" id="DIP-60636N"/>
<dbReference type="FunCoup" id="Q9LF53">
    <property type="interactions" value="290"/>
</dbReference>
<dbReference type="IntAct" id="Q9LF53">
    <property type="interactions" value="30"/>
</dbReference>
<dbReference type="STRING" id="3702.Q9LF53"/>
<dbReference type="PaxDb" id="3702-AT5G17490.1"/>
<dbReference type="ProteomicsDB" id="236970"/>
<dbReference type="EnsemblPlants" id="AT5G17490.1">
    <property type="protein sequence ID" value="AT5G17490.1"/>
    <property type="gene ID" value="AT5G17490"/>
</dbReference>
<dbReference type="GeneID" id="831615"/>
<dbReference type="Gramene" id="AT5G17490.1">
    <property type="protein sequence ID" value="AT5G17490.1"/>
    <property type="gene ID" value="AT5G17490"/>
</dbReference>
<dbReference type="KEGG" id="ath:AT5G17490"/>
<dbReference type="Araport" id="AT5G17490"/>
<dbReference type="TAIR" id="AT5G17490">
    <property type="gene designation" value="RGL3"/>
</dbReference>
<dbReference type="eggNOG" id="ENOG502QPMG">
    <property type="taxonomic scope" value="Eukaryota"/>
</dbReference>
<dbReference type="HOGENOM" id="CLU_011924_4_0_1"/>
<dbReference type="InParanoid" id="Q9LF53"/>
<dbReference type="OMA" id="RRIYRIH"/>
<dbReference type="PhylomeDB" id="Q9LF53"/>
<dbReference type="PRO" id="PR:Q9LF53"/>
<dbReference type="Proteomes" id="UP000006548">
    <property type="component" value="Chromosome 5"/>
</dbReference>
<dbReference type="ExpressionAtlas" id="Q9LF53">
    <property type="expression patterns" value="baseline and differential"/>
</dbReference>
<dbReference type="GO" id="GO:0005634">
    <property type="term" value="C:nucleus"/>
    <property type="evidence" value="ECO:0000304"/>
    <property type="project" value="TAIR"/>
</dbReference>
<dbReference type="GO" id="GO:0003700">
    <property type="term" value="F:DNA-binding transcription factor activity"/>
    <property type="evidence" value="ECO:0000250"/>
    <property type="project" value="TAIR"/>
</dbReference>
<dbReference type="GO" id="GO:0009740">
    <property type="term" value="P:gibberellic acid mediated signaling pathway"/>
    <property type="evidence" value="ECO:0000304"/>
    <property type="project" value="TAIR"/>
</dbReference>
<dbReference type="GO" id="GO:0009739">
    <property type="term" value="P:response to gibberellin"/>
    <property type="evidence" value="ECO:0000270"/>
    <property type="project" value="TAIR"/>
</dbReference>
<dbReference type="FunFam" id="1.10.10.1290:FF:000001">
    <property type="entry name" value="DELLA protein GAI"/>
    <property type="match status" value="1"/>
</dbReference>
<dbReference type="Gene3D" id="1.10.10.1290">
    <property type="entry name" value="Transcriptional regulator DELLA, N-terminal domain"/>
    <property type="match status" value="1"/>
</dbReference>
<dbReference type="InterPro" id="IPR038088">
    <property type="entry name" value="DELLA_N_sf"/>
</dbReference>
<dbReference type="InterPro" id="IPR021914">
    <property type="entry name" value="TF_DELLA_N"/>
</dbReference>
<dbReference type="InterPro" id="IPR005202">
    <property type="entry name" value="TF_GRAS"/>
</dbReference>
<dbReference type="PANTHER" id="PTHR31636">
    <property type="entry name" value="OSJNBA0084A10.13 PROTEIN-RELATED"/>
    <property type="match status" value="1"/>
</dbReference>
<dbReference type="Pfam" id="PF12041">
    <property type="entry name" value="DELLA"/>
    <property type="match status" value="1"/>
</dbReference>
<dbReference type="Pfam" id="PF03514">
    <property type="entry name" value="GRAS"/>
    <property type="match status" value="1"/>
</dbReference>
<dbReference type="SMART" id="SM01129">
    <property type="entry name" value="DELLA"/>
    <property type="match status" value="1"/>
</dbReference>
<dbReference type="PROSITE" id="PS50985">
    <property type="entry name" value="GRAS"/>
    <property type="match status" value="1"/>
</dbReference>
<feature type="chain" id="PRO_0000132238" description="DELLA protein RGL3">
    <location>
        <begin position="1"/>
        <end position="523"/>
    </location>
</feature>
<feature type="domain" description="GRAS" evidence="2">
    <location>
        <begin position="148"/>
        <end position="516"/>
    </location>
</feature>
<feature type="region of interest" description="Disordered" evidence="3">
    <location>
        <begin position="1"/>
        <end position="28"/>
    </location>
</feature>
<feature type="region of interest" description="Leucine repeat I (LRI)" evidence="2">
    <location>
        <begin position="155"/>
        <end position="209"/>
    </location>
</feature>
<feature type="region of interest" description="VHIID" evidence="2">
    <location>
        <begin position="228"/>
        <end position="293"/>
    </location>
</feature>
<feature type="region of interest" description="Leucine repeat II (LRII)" evidence="2">
    <location>
        <begin position="305"/>
        <end position="337"/>
    </location>
</feature>
<feature type="region of interest" description="PFYRE" evidence="2">
    <location>
        <begin position="348"/>
        <end position="437"/>
    </location>
</feature>
<feature type="region of interest" description="SAW" evidence="2">
    <location>
        <begin position="440"/>
        <end position="516"/>
    </location>
</feature>
<feature type="short sequence motif" description="DELLA motif">
    <location>
        <begin position="34"/>
        <end position="38"/>
    </location>
</feature>
<feature type="short sequence motif" description="LEXLE motif">
    <location>
        <begin position="56"/>
        <end position="60"/>
    </location>
</feature>
<feature type="short sequence motif" description="VHYNP motif">
    <location>
        <begin position="78"/>
        <end position="82"/>
    </location>
</feature>
<feature type="short sequence motif" description="VHIID" evidence="2">
    <location>
        <begin position="259"/>
        <end position="263"/>
    </location>
</feature>
<feature type="short sequence motif" description="LXXLL motif" evidence="2">
    <location>
        <begin position="356"/>
        <end position="360"/>
    </location>
</feature>
<accession>Q9LF53</accession>
<name>RGL3_ARATH</name>
<evidence type="ECO:0000250" key="1"/>
<evidence type="ECO:0000255" key="2">
    <source>
        <dbReference type="PROSITE-ProRule" id="PRU01191"/>
    </source>
</evidence>
<evidence type="ECO:0000256" key="3">
    <source>
        <dbReference type="SAM" id="MobiDB-lite"/>
    </source>
</evidence>
<evidence type="ECO:0000269" key="4">
    <source>
    </source>
</evidence>
<evidence type="ECO:0000269" key="5">
    <source>
    </source>
</evidence>
<evidence type="ECO:0000269" key="6">
    <source>
    </source>
</evidence>
<evidence type="ECO:0000269" key="7">
    <source>
    </source>
</evidence>
<evidence type="ECO:0000269" key="8">
    <source>
    </source>
</evidence>
<evidence type="ECO:0000269" key="9">
    <source>
    </source>
</evidence>
<evidence type="ECO:0000305" key="10"/>
<reference key="1">
    <citation type="journal article" date="2000" name="Nature">
        <title>Sequence and analysis of chromosome 5 of the plant Arabidopsis thaliana.</title>
        <authorList>
            <person name="Tabata S."/>
            <person name="Kaneko T."/>
            <person name="Nakamura Y."/>
            <person name="Kotani H."/>
            <person name="Kato T."/>
            <person name="Asamizu E."/>
            <person name="Miyajima N."/>
            <person name="Sasamoto S."/>
            <person name="Kimura T."/>
            <person name="Hosouchi T."/>
            <person name="Kawashima K."/>
            <person name="Kohara M."/>
            <person name="Matsumoto M."/>
            <person name="Matsuno A."/>
            <person name="Muraki A."/>
            <person name="Nakayama S."/>
            <person name="Nakazaki N."/>
            <person name="Naruo K."/>
            <person name="Okumura S."/>
            <person name="Shinpo S."/>
            <person name="Takeuchi C."/>
            <person name="Wada T."/>
            <person name="Watanabe A."/>
            <person name="Yamada M."/>
            <person name="Yasuda M."/>
            <person name="Sato S."/>
            <person name="de la Bastide M."/>
            <person name="Huang E."/>
            <person name="Spiegel L."/>
            <person name="Gnoj L."/>
            <person name="O'Shaughnessy A."/>
            <person name="Preston R."/>
            <person name="Habermann K."/>
            <person name="Murray J."/>
            <person name="Johnson D."/>
            <person name="Rohlfing T."/>
            <person name="Nelson J."/>
            <person name="Stoneking T."/>
            <person name="Pepin K."/>
            <person name="Spieth J."/>
            <person name="Sekhon M."/>
            <person name="Armstrong J."/>
            <person name="Becker M."/>
            <person name="Belter E."/>
            <person name="Cordum H."/>
            <person name="Cordes M."/>
            <person name="Courtney L."/>
            <person name="Courtney W."/>
            <person name="Dante M."/>
            <person name="Du H."/>
            <person name="Edwards J."/>
            <person name="Fryman J."/>
            <person name="Haakensen B."/>
            <person name="Lamar E."/>
            <person name="Latreille P."/>
            <person name="Leonard S."/>
            <person name="Meyer R."/>
            <person name="Mulvaney E."/>
            <person name="Ozersky P."/>
            <person name="Riley A."/>
            <person name="Strowmatt C."/>
            <person name="Wagner-McPherson C."/>
            <person name="Wollam A."/>
            <person name="Yoakum M."/>
            <person name="Bell M."/>
            <person name="Dedhia N."/>
            <person name="Parnell L."/>
            <person name="Shah R."/>
            <person name="Rodriguez M."/>
            <person name="Hoon See L."/>
            <person name="Vil D."/>
            <person name="Baker J."/>
            <person name="Kirchoff K."/>
            <person name="Toth K."/>
            <person name="King L."/>
            <person name="Bahret A."/>
            <person name="Miller B."/>
            <person name="Marra M.A."/>
            <person name="Martienssen R."/>
            <person name="McCombie W.R."/>
            <person name="Wilson R.K."/>
            <person name="Murphy G."/>
            <person name="Bancroft I."/>
            <person name="Volckaert G."/>
            <person name="Wambutt R."/>
            <person name="Duesterhoeft A."/>
            <person name="Stiekema W."/>
            <person name="Pohl T."/>
            <person name="Entian K.-D."/>
            <person name="Terryn N."/>
            <person name="Hartley N."/>
            <person name="Bent E."/>
            <person name="Johnson S."/>
            <person name="Langham S.-A."/>
            <person name="McCullagh B."/>
            <person name="Robben J."/>
            <person name="Grymonprez B."/>
            <person name="Zimmermann W."/>
            <person name="Ramsperger U."/>
            <person name="Wedler H."/>
            <person name="Balke K."/>
            <person name="Wedler E."/>
            <person name="Peters S."/>
            <person name="van Staveren M."/>
            <person name="Dirkse W."/>
            <person name="Mooijman P."/>
            <person name="Klein Lankhorst R."/>
            <person name="Weitzenegger T."/>
            <person name="Bothe G."/>
            <person name="Rose M."/>
            <person name="Hauf J."/>
            <person name="Berneiser S."/>
            <person name="Hempel S."/>
            <person name="Feldpausch M."/>
            <person name="Lamberth S."/>
            <person name="Villarroel R."/>
            <person name="Gielen J."/>
            <person name="Ardiles W."/>
            <person name="Bents O."/>
            <person name="Lemcke K."/>
            <person name="Kolesov G."/>
            <person name="Mayer K.F.X."/>
            <person name="Rudd S."/>
            <person name="Schoof H."/>
            <person name="Schueller C."/>
            <person name="Zaccaria P."/>
            <person name="Mewes H.-W."/>
            <person name="Bevan M."/>
            <person name="Fransz P.F."/>
        </authorList>
    </citation>
    <scope>NUCLEOTIDE SEQUENCE [LARGE SCALE GENOMIC DNA]</scope>
    <source>
        <strain>cv. Columbia</strain>
    </source>
</reference>
<reference key="2">
    <citation type="journal article" date="2017" name="Plant J.">
        <title>Araport11: a complete reannotation of the Arabidopsis thaliana reference genome.</title>
        <authorList>
            <person name="Cheng C.Y."/>
            <person name="Krishnakumar V."/>
            <person name="Chan A.P."/>
            <person name="Thibaud-Nissen F."/>
            <person name="Schobel S."/>
            <person name="Town C.D."/>
        </authorList>
    </citation>
    <scope>GENOME REANNOTATION</scope>
    <source>
        <strain>cv. Columbia</strain>
    </source>
</reference>
<reference key="3">
    <citation type="journal article" date="2002" name="Science">
        <title>Functional annotation of a full-length Arabidopsis cDNA collection.</title>
        <authorList>
            <person name="Seki M."/>
            <person name="Narusaka M."/>
            <person name="Kamiya A."/>
            <person name="Ishida J."/>
            <person name="Satou M."/>
            <person name="Sakurai T."/>
            <person name="Nakajima M."/>
            <person name="Enju A."/>
            <person name="Akiyama K."/>
            <person name="Oono Y."/>
            <person name="Muramatsu M."/>
            <person name="Hayashizaki Y."/>
            <person name="Kawai J."/>
            <person name="Carninci P."/>
            <person name="Itoh M."/>
            <person name="Ishii Y."/>
            <person name="Arakawa T."/>
            <person name="Shibata K."/>
            <person name="Shinagawa A."/>
            <person name="Shinozaki K."/>
        </authorList>
    </citation>
    <scope>NUCLEOTIDE SEQUENCE [LARGE SCALE MRNA]</scope>
    <source>
        <strain>cv. Columbia</strain>
    </source>
</reference>
<reference key="4">
    <citation type="journal article" date="2003" name="Science">
        <title>Empirical analysis of transcriptional activity in the Arabidopsis genome.</title>
        <authorList>
            <person name="Yamada K."/>
            <person name="Lim J."/>
            <person name="Dale J.M."/>
            <person name="Chen H."/>
            <person name="Shinn P."/>
            <person name="Palm C.J."/>
            <person name="Southwick A.M."/>
            <person name="Wu H.C."/>
            <person name="Kim C.J."/>
            <person name="Nguyen M."/>
            <person name="Pham P.K."/>
            <person name="Cheuk R.F."/>
            <person name="Karlin-Newmann G."/>
            <person name="Liu S.X."/>
            <person name="Lam B."/>
            <person name="Sakano H."/>
            <person name="Wu T."/>
            <person name="Yu G."/>
            <person name="Miranda M."/>
            <person name="Quach H.L."/>
            <person name="Tripp M."/>
            <person name="Chang C.H."/>
            <person name="Lee J.M."/>
            <person name="Toriumi M.J."/>
            <person name="Chan M.M."/>
            <person name="Tang C.C."/>
            <person name="Onodera C.S."/>
            <person name="Deng J.M."/>
            <person name="Akiyama K."/>
            <person name="Ansari Y."/>
            <person name="Arakawa T."/>
            <person name="Banh J."/>
            <person name="Banno F."/>
            <person name="Bowser L."/>
            <person name="Brooks S.Y."/>
            <person name="Carninci P."/>
            <person name="Chao Q."/>
            <person name="Choy N."/>
            <person name="Enju A."/>
            <person name="Goldsmith A.D."/>
            <person name="Gurjal M."/>
            <person name="Hansen N.F."/>
            <person name="Hayashizaki Y."/>
            <person name="Johnson-Hopson C."/>
            <person name="Hsuan V.W."/>
            <person name="Iida K."/>
            <person name="Karnes M."/>
            <person name="Khan S."/>
            <person name="Koesema E."/>
            <person name="Ishida J."/>
            <person name="Jiang P.X."/>
            <person name="Jones T."/>
            <person name="Kawai J."/>
            <person name="Kamiya A."/>
            <person name="Meyers C."/>
            <person name="Nakajima M."/>
            <person name="Narusaka M."/>
            <person name="Seki M."/>
            <person name="Sakurai T."/>
            <person name="Satou M."/>
            <person name="Tamse R."/>
            <person name="Vaysberg M."/>
            <person name="Wallender E.K."/>
            <person name="Wong C."/>
            <person name="Yamamura Y."/>
            <person name="Yuan S."/>
            <person name="Shinozaki K."/>
            <person name="Davis R.W."/>
            <person name="Theologis A."/>
            <person name="Ecker J.R."/>
        </authorList>
    </citation>
    <scope>NUCLEOTIDE SEQUENCE [LARGE SCALE MRNA]</scope>
    <source>
        <strain>cv. Columbia</strain>
    </source>
</reference>
<reference key="5">
    <citation type="journal article" date="2002" name="Plant Cell">
        <title>Arabidopsis RGL1 encodes a negative regulator of gibberellin responses.</title>
        <authorList>
            <person name="Wen C.-K."/>
            <person name="Chang C."/>
        </authorList>
    </citation>
    <scope>TISSUE SPECIFICITY</scope>
</reference>
<reference key="6">
    <citation type="journal article" date="2002" name="Genes Dev.">
        <title>Gibberellin regulates Arabidopsis seed germination via RGL2, a GAI/RGA-like gene whose expression is up-regulated following imbibition.</title>
        <authorList>
            <person name="Lee S."/>
            <person name="Cheng H."/>
            <person name="King K.E."/>
            <person name="Wang W."/>
            <person name="He Y."/>
            <person name="Hussain A."/>
            <person name="Lo J."/>
            <person name="Harberd N.P."/>
            <person name="Peng J."/>
        </authorList>
    </citation>
    <scope>IDENTIFICATION</scope>
</reference>
<reference key="7">
    <citation type="journal article" date="2003" name="Nature">
        <title>Auxin promotes Arabidopsis root growth by modulating gibberellin response.</title>
        <authorList>
            <person name="Fu X."/>
            <person name="Harberd N.P."/>
        </authorList>
    </citation>
    <scope>FUNCTION</scope>
</reference>
<reference key="8">
    <citation type="journal article" date="2003" name="Plant Cell">
        <title>Ethylene regulates Arabidopsis development via the modulation of DELLA protein growth repressor function.</title>
        <authorList>
            <person name="Achard P."/>
            <person name="Vriezen W.H."/>
            <person name="Van Der Straeten D."/>
            <person name="Harberd N.P."/>
        </authorList>
    </citation>
    <scope>FUNCTION</scope>
</reference>
<reference key="9">
    <citation type="journal article" date="2004" name="Plant Physiol.">
        <title>Della proteins and gibberellin-regulated seed germination and floral development in Arabidopsis.</title>
        <authorList>
            <person name="Tyler L."/>
            <person name="Thomas S.G."/>
            <person name="Hu J."/>
            <person name="Dill A."/>
            <person name="Alonso J.M."/>
            <person name="Ecker J.R."/>
            <person name="Sun T.-P."/>
        </authorList>
    </citation>
    <scope>INTERACTION WITH GID2</scope>
</reference>
<reference key="10">
    <citation type="journal article" date="2006" name="Plant J.">
        <title>Identification and characterization of Arabidopsis gibberellin receptors.</title>
        <authorList>
            <person name="Nakajima M."/>
            <person name="Shimada A."/>
            <person name="Takashi Y."/>
            <person name="Kim Y.C."/>
            <person name="Park S.H."/>
            <person name="Ueguchi-Tanaka M."/>
            <person name="Suzuki H."/>
            <person name="Katoh E."/>
            <person name="Iuchi S."/>
            <person name="Kobayashi M."/>
            <person name="Maeda T."/>
            <person name="Matsuoka M."/>
            <person name="Yamaguchi I."/>
        </authorList>
    </citation>
    <scope>INTERACTION WITH GID1A; GID1B AND GID1C</scope>
</reference>
<reference key="11">
    <citation type="journal article" date="2013" name="Plant Cell">
        <title>DELLA proteins and their interacting RING Finger proteins repress gibberellin responses by binding to the promoters of a subset of gibberellin-responsive genes in Arabidopsis.</title>
        <authorList>
            <person name="Park J."/>
            <person name="Nguyen K.T."/>
            <person name="Park E."/>
            <person name="Jeon J.S."/>
            <person name="Choi G."/>
        </authorList>
    </citation>
    <scope>INTERACTION WITH BOI; BRG1; BRG2 AND BRG3</scope>
    <scope>DISRUPTION PHENOTYPE</scope>
</reference>
<gene>
    <name type="primary">RGL3</name>
    <name type="ordered locus">At5g17490</name>
    <name type="ORF">K3M16.60</name>
</gene>
<sequence length="523" mass="57327">MKRSHQETSVEEEAPSMVEKLENGCGGGGDDNMDEFLAVLGYKVRSSDMADVAQKLEQLEMVLSNDIASSSNAFNDTVHYNPSDLSGWAQSMLSDLNYYPDLDPNRICDLRPITDDDECCSSNSNSNKRIRLGPWCDSVTSESTRSVVLIEETGVRLVQALVACAEAVQLENLSLADALVKRVGLLAASQAGAMGKVATYFAEALARRIYRIHPSAAAIDPSFEEILQMNFYDSCPYLKFAHFTANQAILEAVTTSRVVHVIDLGLNQGMQWPALMQALALRPGGPPSFRLTGVGNPSNREGIQELGWKLAQLAQAIGVEFKFNGLTTERLSDLEPDMFETRTESETLVVNSVFELHPVLSQPGSIEKLLATVKAVKPGLVTVVEQEANHNGDVFLDRFNEALHYYSSLFDSLEDGVVIPSQDRVMSEVYLGRQILNLVATEGSDRIERHETLAQWRKRMGSAGFDPVNLGSDAFKQASLLLALSGGGDGYRVEENDGSLMLAWQTKPLIAASAWKLAAELRR</sequence>
<organism>
    <name type="scientific">Arabidopsis thaliana</name>
    <name type="common">Mouse-ear cress</name>
    <dbReference type="NCBI Taxonomy" id="3702"/>
    <lineage>
        <taxon>Eukaryota</taxon>
        <taxon>Viridiplantae</taxon>
        <taxon>Streptophyta</taxon>
        <taxon>Embryophyta</taxon>
        <taxon>Tracheophyta</taxon>
        <taxon>Spermatophyta</taxon>
        <taxon>Magnoliopsida</taxon>
        <taxon>eudicotyledons</taxon>
        <taxon>Gunneridae</taxon>
        <taxon>Pentapetalae</taxon>
        <taxon>rosids</taxon>
        <taxon>malvids</taxon>
        <taxon>Brassicales</taxon>
        <taxon>Brassicaceae</taxon>
        <taxon>Camelineae</taxon>
        <taxon>Arabidopsis</taxon>
    </lineage>
</organism>
<proteinExistence type="evidence at protein level"/>
<protein>
    <recommendedName>
        <fullName>DELLA protein RGL3</fullName>
    </recommendedName>
    <alternativeName>
        <fullName>GRAS family protein 27</fullName>
        <shortName>AtGRAS-27</shortName>
    </alternativeName>
    <alternativeName>
        <fullName>RGA-like protein 3</fullName>
    </alternativeName>
</protein>
<comment type="function">
    <text evidence="1 5 6">Probable transcriptional regulator that acts as a repressor of the gibberellin (GA) signaling pathway. No effect of the BOI proteins on its stability. Probably acts by participating in large multiprotein complexes that repress transcription of GA-inducible genes. Its activity may be regulated by phytohormones such as auxin and ethylene (By similarity).</text>
</comment>
<comment type="subunit">
    <text evidence="7 8 9">Interacts directly with the GID2/SLY1 component of the SCF(GID2) complex, suggesting that it may be ubiquitinated. Interacts (via N-terminus) with GID1A, GID1B and GID1B (via N-terminus). Interacts with the BOI proteins BOI, BRG1, BRG2 and BRG3.</text>
</comment>
<comment type="interaction">
    <interactant intactId="EBI-15681313">
        <id>Q9LF53</id>
    </interactant>
    <interactant intactId="EBI-25511108">
        <id>A0A384KCV6</id>
        <label>At3g46630</label>
    </interactant>
    <organismsDiffer>false</organismsDiffer>
    <experiments>4</experiments>
</comment>
<comment type="interaction">
    <interactant intactId="EBI-15681313">
        <id>Q9LF53</id>
    </interactant>
    <interactant intactId="EBI-3387100">
        <id>Q9FMT4</id>
        <label>At5g14170</label>
    </interactant>
    <organismsDiffer>false</organismsDiffer>
    <experiments>3</experiments>
</comment>
<comment type="interaction">
    <interactant intactId="EBI-15681313">
        <id>Q9LF53</id>
    </interactant>
    <interactant intactId="EBI-25522213">
        <id>Q94C60</id>
        <label>At5g63670</label>
    </interactant>
    <organismsDiffer>false</organismsDiffer>
    <experiments>3</experiments>
</comment>
<comment type="interaction">
    <interactant intactId="EBI-15681313">
        <id>Q9LF53</id>
    </interactant>
    <interactant intactId="EBI-25511181">
        <id>A0A384KCR9</id>
        <label>AXX17_At3g07670</label>
    </interactant>
    <organismsDiffer>false</organismsDiffer>
    <experiments>4</experiments>
</comment>
<comment type="interaction">
    <interactant intactId="EBI-15681313">
        <id>Q9LF53</id>
    </interactant>
    <interactant intactId="EBI-25522309">
        <id>A0A178UH48</id>
        <label>AXX17_At5g15360</label>
    </interactant>
    <organismsDiffer>false</organismsDiffer>
    <experiments>3</experiments>
</comment>
<comment type="interaction">
    <interactant intactId="EBI-15681313">
        <id>Q9LF53</id>
    </interactant>
    <interactant intactId="EBI-942713">
        <id>B9DGI8</id>
        <label>BZIP63</label>
    </interactant>
    <organismsDiffer>false</organismsDiffer>
    <experiments>3</experiments>
</comment>
<comment type="interaction">
    <interactant intactId="EBI-15681313">
        <id>Q9LF53</id>
    </interactant>
    <interactant intactId="EBI-1238377">
        <id>Q84JC2</id>
        <label>DOGL4</label>
    </interactant>
    <organismsDiffer>false</organismsDiffer>
    <experiments>3</experiments>
</comment>
<comment type="interaction">
    <interactant intactId="EBI-15681313">
        <id>Q9LF53</id>
    </interactant>
    <interactant intactId="EBI-963597">
        <id>Q9MAA7</id>
        <label>GID1A</label>
    </interactant>
    <organismsDiffer>false</organismsDiffer>
    <experiments>5</experiments>
</comment>
<comment type="interaction">
    <interactant intactId="EBI-15681313">
        <id>Q9LF53</id>
    </interactant>
    <interactant intactId="EBI-963686">
        <id>Q9LYC1</id>
        <label>GID1B</label>
    </interactant>
    <organismsDiffer>false</organismsDiffer>
    <experiments>4</experiments>
</comment>
<comment type="interaction">
    <interactant intactId="EBI-15681313">
        <id>Q9LF53</id>
    </interactant>
    <interactant intactId="EBI-963794">
        <id>Q940G6</id>
        <label>GID1C</label>
    </interactant>
    <organismsDiffer>false</organismsDiffer>
    <experiments>4</experiments>
</comment>
<comment type="interaction">
    <interactant intactId="EBI-15681313">
        <id>Q9LF53</id>
    </interactant>
    <interactant intactId="EBI-4434651">
        <id>Q8LF89</id>
        <label>GRXC8</label>
    </interactant>
    <organismsDiffer>false</organismsDiffer>
    <experiments>3</experiments>
</comment>
<comment type="interaction">
    <interactant intactId="EBI-15681313">
        <id>Q9LF53</id>
    </interactant>
    <interactant intactId="EBI-4426504">
        <id>Q93WJ9</id>
        <label>KAN1</label>
    </interactant>
    <organismsDiffer>false</organismsDiffer>
    <experiments>3</experiments>
</comment>
<comment type="interaction">
    <interactant intactId="EBI-15681313">
        <id>Q9LF53</id>
    </interactant>
    <interactant intactId="EBI-15211238">
        <id>Q9FFJ9</id>
        <label>MJJ3.20</label>
    </interactant>
    <organismsDiffer>false</organismsDiffer>
    <experiments>3</experiments>
</comment>
<comment type="interaction">
    <interactant intactId="EBI-15681313">
        <id>Q9LF53</id>
    </interactant>
    <interactant intactId="EBI-4465639">
        <id>Q84JZ6</id>
        <label>MORF3</label>
    </interactant>
    <organismsDiffer>false</organismsDiffer>
    <experiments>3</experiments>
</comment>
<comment type="interaction">
    <interactant intactId="EBI-15681313">
        <id>Q9LF53</id>
    </interactant>
    <interactant intactId="EBI-4424647">
        <id>Q9LPZ1</id>
        <label>MORF9</label>
    </interactant>
    <organismsDiffer>false</organismsDiffer>
    <experiments>3</experiments>
</comment>
<comment type="interaction">
    <interactant intactId="EBI-15681313">
        <id>Q9LF53</id>
    </interactant>
    <interactant intactId="EBI-25511270">
        <id>Q9FX36</id>
        <label>MYB54</label>
    </interactant>
    <organismsDiffer>false</organismsDiffer>
    <experiments>3</experiments>
</comment>
<comment type="interaction">
    <interactant intactId="EBI-15681313">
        <id>Q9LF53</id>
    </interactant>
    <interactant intactId="EBI-2114089">
        <id>Q38899</id>
        <label>ORC2</label>
    </interactant>
    <organismsDiffer>false</organismsDiffer>
    <experiments>3</experiments>
</comment>
<comment type="interaction">
    <interactant intactId="EBI-15681313">
        <id>Q9LF53</id>
    </interactant>
    <interactant intactId="EBI-4441998">
        <id>Q9SZC9</id>
        <label>PAA1</label>
    </interactant>
    <organismsDiffer>false</organismsDiffer>
    <experiments>3</experiments>
</comment>
<comment type="interaction">
    <interactant intactId="EBI-15681313">
        <id>Q9LF53</id>
    </interactant>
    <interactant intactId="EBI-531812">
        <id>Q9ZNT7</id>
        <label>PHB2</label>
    </interactant>
    <organismsDiffer>false</organismsDiffer>
    <experiments>3</experiments>
</comment>
<comment type="interaction">
    <interactant intactId="EBI-15681313">
        <id>Q9LF53</id>
    </interactant>
    <interactant intactId="EBI-4424877">
        <id>Q9S7W5</id>
        <label>TCP13</label>
    </interactant>
    <organismsDiffer>false</organismsDiffer>
    <experiments>3</experiments>
</comment>
<comment type="interaction">
    <interactant intactId="EBI-15681313">
        <id>Q9LF53</id>
    </interactant>
    <interactant intactId="EBI-15192327">
        <id>Q9LEZ9</id>
        <label>TCP17</label>
    </interactant>
    <organismsDiffer>false</organismsDiffer>
    <experiments>3</experiments>
</comment>
<comment type="interaction">
    <interactant intactId="EBI-15681313">
        <id>Q9LF53</id>
    </interactant>
    <interactant intactId="EBI-1792583">
        <id>Q8W4J8</id>
        <label>TIFY7</label>
    </interactant>
    <organismsDiffer>false</organismsDiffer>
    <experiments>3</experiments>
</comment>
<comment type="interaction">
    <interactant intactId="EBI-15681313">
        <id>Q9LF53</id>
    </interactant>
    <interactant intactId="EBI-15193683">
        <id>Q5CCK4</id>
        <label>VAL2</label>
    </interactant>
    <organismsDiffer>false</organismsDiffer>
    <experiments>3</experiments>
</comment>
<comment type="subcellular location">
    <subcellularLocation>
        <location evidence="1">Nucleus</location>
    </subcellularLocation>
</comment>
<comment type="tissue specificity">
    <text evidence="4">Expressed at very low level. Mainly expressed in germinating seeds and flowers and siliques. Not expressed in other tissues.</text>
</comment>
<comment type="PTM">
    <text evidence="1">Phosphorylated.</text>
</comment>
<comment type="PTM">
    <text evidence="1">May be ubiquitinated.</text>
</comment>
<comment type="disruption phenotype">
    <text evidence="9">Rga, gai, rgl1, rgl2 and rgl3 pentuple mutant displays constitutive GA responses even in the absence of GA treatment.</text>
</comment>
<comment type="similarity">
    <text evidence="10">Belongs to the GRAS family. DELLA subfamily.</text>
</comment>
<keyword id="KW-0217">Developmental protein</keyword>
<keyword id="KW-0939">Gibberellin signaling pathway</keyword>
<keyword id="KW-0539">Nucleus</keyword>
<keyword id="KW-0597">Phosphoprotein</keyword>
<keyword id="KW-1185">Reference proteome</keyword>
<keyword id="KW-0678">Repressor</keyword>
<keyword id="KW-0804">Transcription</keyword>
<keyword id="KW-0805">Transcription regulation</keyword>
<keyword id="KW-0832">Ubl conjugation</keyword>